<dbReference type="EMBL" id="BX294148">
    <property type="protein sequence ID" value="CAD76022.1"/>
    <property type="molecule type" value="Genomic_DNA"/>
</dbReference>
<dbReference type="RefSeq" id="NP_868645.1">
    <property type="nucleotide sequence ID" value="NC_005027.1"/>
</dbReference>
<dbReference type="RefSeq" id="WP_007337437.1">
    <property type="nucleotide sequence ID" value="NC_005027.1"/>
</dbReference>
<dbReference type="SMR" id="Q7UM95"/>
<dbReference type="FunCoup" id="Q7UM95">
    <property type="interactions" value="485"/>
</dbReference>
<dbReference type="STRING" id="243090.RB8974"/>
<dbReference type="EnsemblBacteria" id="CAD76022">
    <property type="protein sequence ID" value="CAD76022"/>
    <property type="gene ID" value="RB8974"/>
</dbReference>
<dbReference type="KEGG" id="rba:RB8974"/>
<dbReference type="PATRIC" id="fig|243090.15.peg.4305"/>
<dbReference type="eggNOG" id="COG0576">
    <property type="taxonomic scope" value="Bacteria"/>
</dbReference>
<dbReference type="HOGENOM" id="CLU_057217_0_2_0"/>
<dbReference type="InParanoid" id="Q7UM95"/>
<dbReference type="OrthoDB" id="9812586at2"/>
<dbReference type="Proteomes" id="UP000001025">
    <property type="component" value="Chromosome"/>
</dbReference>
<dbReference type="GO" id="GO:0005737">
    <property type="term" value="C:cytoplasm"/>
    <property type="evidence" value="ECO:0007669"/>
    <property type="project" value="UniProtKB-SubCell"/>
</dbReference>
<dbReference type="GO" id="GO:0000774">
    <property type="term" value="F:adenyl-nucleotide exchange factor activity"/>
    <property type="evidence" value="ECO:0000318"/>
    <property type="project" value="GO_Central"/>
</dbReference>
<dbReference type="GO" id="GO:0042803">
    <property type="term" value="F:protein homodimerization activity"/>
    <property type="evidence" value="ECO:0007669"/>
    <property type="project" value="InterPro"/>
</dbReference>
<dbReference type="GO" id="GO:0051087">
    <property type="term" value="F:protein-folding chaperone binding"/>
    <property type="evidence" value="ECO:0007669"/>
    <property type="project" value="InterPro"/>
</dbReference>
<dbReference type="GO" id="GO:0051082">
    <property type="term" value="F:unfolded protein binding"/>
    <property type="evidence" value="ECO:0000318"/>
    <property type="project" value="GO_Central"/>
</dbReference>
<dbReference type="GO" id="GO:0006457">
    <property type="term" value="P:protein folding"/>
    <property type="evidence" value="ECO:0007669"/>
    <property type="project" value="InterPro"/>
</dbReference>
<dbReference type="CDD" id="cd00446">
    <property type="entry name" value="GrpE"/>
    <property type="match status" value="1"/>
</dbReference>
<dbReference type="FunFam" id="2.30.22.10:FF:000001">
    <property type="entry name" value="Protein GrpE"/>
    <property type="match status" value="1"/>
</dbReference>
<dbReference type="FunFam" id="3.90.20.20:FF:000025">
    <property type="entry name" value="Protein GrpE"/>
    <property type="match status" value="1"/>
</dbReference>
<dbReference type="Gene3D" id="3.90.20.20">
    <property type="match status" value="1"/>
</dbReference>
<dbReference type="Gene3D" id="2.30.22.10">
    <property type="entry name" value="Head domain of nucleotide exchange factor GrpE"/>
    <property type="match status" value="1"/>
</dbReference>
<dbReference type="HAMAP" id="MF_01151">
    <property type="entry name" value="GrpE"/>
    <property type="match status" value="1"/>
</dbReference>
<dbReference type="InterPro" id="IPR000740">
    <property type="entry name" value="GrpE"/>
</dbReference>
<dbReference type="InterPro" id="IPR013805">
    <property type="entry name" value="GrpE_coiled_coil"/>
</dbReference>
<dbReference type="InterPro" id="IPR009012">
    <property type="entry name" value="GrpE_head"/>
</dbReference>
<dbReference type="PANTHER" id="PTHR21237">
    <property type="entry name" value="GRPE PROTEIN"/>
    <property type="match status" value="1"/>
</dbReference>
<dbReference type="PANTHER" id="PTHR21237:SF23">
    <property type="entry name" value="GRPE PROTEIN HOMOLOG, MITOCHONDRIAL"/>
    <property type="match status" value="1"/>
</dbReference>
<dbReference type="Pfam" id="PF01025">
    <property type="entry name" value="GrpE"/>
    <property type="match status" value="1"/>
</dbReference>
<dbReference type="PRINTS" id="PR00773">
    <property type="entry name" value="GRPEPROTEIN"/>
</dbReference>
<dbReference type="SUPFAM" id="SSF58014">
    <property type="entry name" value="Coiled-coil domain of nucleotide exchange factor GrpE"/>
    <property type="match status" value="1"/>
</dbReference>
<dbReference type="SUPFAM" id="SSF51064">
    <property type="entry name" value="Head domain of nucleotide exchange factor GrpE"/>
    <property type="match status" value="1"/>
</dbReference>
<dbReference type="PROSITE" id="PS01071">
    <property type="entry name" value="GRPE"/>
    <property type="match status" value="1"/>
</dbReference>
<comment type="function">
    <text evidence="1">Participates actively in the response to hyperosmotic and heat shock by preventing the aggregation of stress-denatured proteins, in association with DnaK and GrpE. It is the nucleotide exchange factor for DnaK and may function as a thermosensor. Unfolded proteins bind initially to DnaJ; upon interaction with the DnaJ-bound protein, DnaK hydrolyzes its bound ATP, resulting in the formation of a stable complex. GrpE releases ADP from DnaK; ATP binding to DnaK triggers the release of the substrate protein, thus completing the reaction cycle. Several rounds of ATP-dependent interactions between DnaJ, DnaK and GrpE are required for fully efficient folding.</text>
</comment>
<comment type="subunit">
    <text evidence="1">Homodimer.</text>
</comment>
<comment type="subcellular location">
    <subcellularLocation>
        <location evidence="1">Cytoplasm</location>
    </subcellularLocation>
</comment>
<comment type="similarity">
    <text evidence="1">Belongs to the GrpE family.</text>
</comment>
<organism>
    <name type="scientific">Rhodopirellula baltica (strain DSM 10527 / NCIMB 13988 / SH1)</name>
    <dbReference type="NCBI Taxonomy" id="243090"/>
    <lineage>
        <taxon>Bacteria</taxon>
        <taxon>Pseudomonadati</taxon>
        <taxon>Planctomycetota</taxon>
        <taxon>Planctomycetia</taxon>
        <taxon>Pirellulales</taxon>
        <taxon>Pirellulaceae</taxon>
        <taxon>Rhodopirellula</taxon>
    </lineage>
</organism>
<proteinExistence type="inferred from homology"/>
<protein>
    <recommendedName>
        <fullName evidence="1">Protein GrpE</fullName>
    </recommendedName>
    <alternativeName>
        <fullName evidence="1">HSP-70 cofactor</fullName>
    </alternativeName>
</protein>
<feature type="chain" id="PRO_0000113846" description="Protein GrpE">
    <location>
        <begin position="1"/>
        <end position="200"/>
    </location>
</feature>
<feature type="region of interest" description="Disordered" evidence="2">
    <location>
        <begin position="1"/>
        <end position="49"/>
    </location>
</feature>
<feature type="compositionally biased region" description="Acidic residues" evidence="2">
    <location>
        <begin position="1"/>
        <end position="17"/>
    </location>
</feature>
<feature type="compositionally biased region" description="Acidic residues" evidence="2">
    <location>
        <begin position="34"/>
        <end position="44"/>
    </location>
</feature>
<sequence length="200" mass="21927">MNEQPNEELQSEDEQFDPQETVSFEGETAANDEAFAEAGEETRDEEMTRLRGEVEEASKRVLQAQAEAENFRKRLRRDTEAQLKFAGMPLVTDILQVRDNLLRAIEAATTAGDGESAAGLVEGVSMVRKQLDDVLAKHAIKEIPAEGELFDPNFHEAISQMPHPEIASGMVAHVATPGFQMHDRVVRPAQVVVSTGDGSA</sequence>
<name>GRPE_RHOBA</name>
<evidence type="ECO:0000255" key="1">
    <source>
        <dbReference type="HAMAP-Rule" id="MF_01151"/>
    </source>
</evidence>
<evidence type="ECO:0000256" key="2">
    <source>
        <dbReference type="SAM" id="MobiDB-lite"/>
    </source>
</evidence>
<reference key="1">
    <citation type="journal article" date="2003" name="Proc. Natl. Acad. Sci. U.S.A.">
        <title>Complete genome sequence of the marine planctomycete Pirellula sp. strain 1.</title>
        <authorList>
            <person name="Gloeckner F.O."/>
            <person name="Kube M."/>
            <person name="Bauer M."/>
            <person name="Teeling H."/>
            <person name="Lombardot T."/>
            <person name="Ludwig W."/>
            <person name="Gade D."/>
            <person name="Beck A."/>
            <person name="Borzym K."/>
            <person name="Heitmann K."/>
            <person name="Rabus R."/>
            <person name="Schlesner H."/>
            <person name="Amann R."/>
            <person name="Reinhardt R."/>
        </authorList>
    </citation>
    <scope>NUCLEOTIDE SEQUENCE [LARGE SCALE GENOMIC DNA]</scope>
    <source>
        <strain>DSM 10527 / NCIMB 13988 / SH1</strain>
    </source>
</reference>
<keyword id="KW-0143">Chaperone</keyword>
<keyword id="KW-0963">Cytoplasm</keyword>
<keyword id="KW-1185">Reference proteome</keyword>
<keyword id="KW-0346">Stress response</keyword>
<gene>
    <name evidence="1" type="primary">grpE</name>
    <name type="ordered locus">RB8974</name>
</gene>
<accession>Q7UM95</accession>